<evidence type="ECO:0000255" key="1">
    <source>
        <dbReference type="HAMAP-Rule" id="MF_00152"/>
    </source>
</evidence>
<accession>B0R2U6</accession>
<gene>
    <name evidence="1" type="primary">nfo</name>
    <name type="ordered locus">OE_1304F</name>
</gene>
<organism>
    <name type="scientific">Halobacterium salinarum (strain ATCC 29341 / DSM 671 / R1)</name>
    <dbReference type="NCBI Taxonomy" id="478009"/>
    <lineage>
        <taxon>Archaea</taxon>
        <taxon>Methanobacteriati</taxon>
        <taxon>Methanobacteriota</taxon>
        <taxon>Stenosarchaea group</taxon>
        <taxon>Halobacteria</taxon>
        <taxon>Halobacteriales</taxon>
        <taxon>Halobacteriaceae</taxon>
        <taxon>Halobacterium</taxon>
        <taxon>Halobacterium salinarum NRC-34001</taxon>
    </lineage>
</organism>
<sequence length="275" mass="29150">MRVGAHVSIAGGVDNAVTNELDVGGNCGQIFTHSPQVWQDPNIGADEAAAFREGTAADLDGPWVIHSSYLVNLCTPKDDLRAKSIDSMQAEVDAAHTLGIPYVNVHLGAHTGAGVDDGLDNAASALDELDIPDDVTVLIESDAGSGTKLGGDFEHLHEVLTRSDQDLDVCIDTAHAFAAGYDLSTEAAVNDTLAAFDDVVGLDHLQYVHLNDSKHACGTNKDEHAHIGEGHIGEAGMRAFINHDAIADVPLVLETPHEDGRGFAWNIDRVRDLRA</sequence>
<keyword id="KW-0227">DNA damage</keyword>
<keyword id="KW-0234">DNA repair</keyword>
<keyword id="KW-0255">Endonuclease</keyword>
<keyword id="KW-0378">Hydrolase</keyword>
<keyword id="KW-0479">Metal-binding</keyword>
<keyword id="KW-0540">Nuclease</keyword>
<keyword id="KW-0862">Zinc</keyword>
<dbReference type="EC" id="3.1.21.2" evidence="1"/>
<dbReference type="EMBL" id="AM774415">
    <property type="protein sequence ID" value="CAP13056.1"/>
    <property type="molecule type" value="Genomic_DNA"/>
</dbReference>
<dbReference type="RefSeq" id="WP_010902092.1">
    <property type="nucleotide sequence ID" value="NC_010364.1"/>
</dbReference>
<dbReference type="SMR" id="B0R2U6"/>
<dbReference type="EnsemblBacteria" id="CAP13056">
    <property type="protein sequence ID" value="CAP13056"/>
    <property type="gene ID" value="OE_1304F"/>
</dbReference>
<dbReference type="KEGG" id="hsl:OE_1304F"/>
<dbReference type="HOGENOM" id="CLU_025885_0_1_2"/>
<dbReference type="PhylomeDB" id="B0R2U6"/>
<dbReference type="Proteomes" id="UP000001321">
    <property type="component" value="Chromosome"/>
</dbReference>
<dbReference type="GO" id="GO:0008833">
    <property type="term" value="F:deoxyribonuclease IV (phage-T4-induced) activity"/>
    <property type="evidence" value="ECO:0007669"/>
    <property type="project" value="UniProtKB-UniRule"/>
</dbReference>
<dbReference type="GO" id="GO:0003677">
    <property type="term" value="F:DNA binding"/>
    <property type="evidence" value="ECO:0007669"/>
    <property type="project" value="InterPro"/>
</dbReference>
<dbReference type="GO" id="GO:0003906">
    <property type="term" value="F:DNA-(apurinic or apyrimidinic site) endonuclease activity"/>
    <property type="evidence" value="ECO:0007669"/>
    <property type="project" value="TreeGrafter"/>
</dbReference>
<dbReference type="GO" id="GO:0008081">
    <property type="term" value="F:phosphoric diester hydrolase activity"/>
    <property type="evidence" value="ECO:0007669"/>
    <property type="project" value="TreeGrafter"/>
</dbReference>
<dbReference type="GO" id="GO:0008270">
    <property type="term" value="F:zinc ion binding"/>
    <property type="evidence" value="ECO:0007669"/>
    <property type="project" value="UniProtKB-UniRule"/>
</dbReference>
<dbReference type="GO" id="GO:0006284">
    <property type="term" value="P:base-excision repair"/>
    <property type="evidence" value="ECO:0007669"/>
    <property type="project" value="TreeGrafter"/>
</dbReference>
<dbReference type="CDD" id="cd00019">
    <property type="entry name" value="AP2Ec"/>
    <property type="match status" value="1"/>
</dbReference>
<dbReference type="FunFam" id="3.20.20.150:FF:000001">
    <property type="entry name" value="Probable endonuclease 4"/>
    <property type="match status" value="1"/>
</dbReference>
<dbReference type="Gene3D" id="3.20.20.150">
    <property type="entry name" value="Divalent-metal-dependent TIM barrel enzymes"/>
    <property type="match status" value="1"/>
</dbReference>
<dbReference type="HAMAP" id="MF_00152">
    <property type="entry name" value="Nfo"/>
    <property type="match status" value="1"/>
</dbReference>
<dbReference type="InterPro" id="IPR001719">
    <property type="entry name" value="AP_endonuc_2"/>
</dbReference>
<dbReference type="InterPro" id="IPR018246">
    <property type="entry name" value="AP_endonuc_F2_Zn_BS"/>
</dbReference>
<dbReference type="InterPro" id="IPR036237">
    <property type="entry name" value="Xyl_isomerase-like_sf"/>
</dbReference>
<dbReference type="InterPro" id="IPR013022">
    <property type="entry name" value="Xyl_isomerase-like_TIM-brl"/>
</dbReference>
<dbReference type="NCBIfam" id="TIGR00587">
    <property type="entry name" value="nfo"/>
    <property type="match status" value="1"/>
</dbReference>
<dbReference type="PANTHER" id="PTHR21445:SF0">
    <property type="entry name" value="APURINIC-APYRIMIDINIC ENDONUCLEASE"/>
    <property type="match status" value="1"/>
</dbReference>
<dbReference type="PANTHER" id="PTHR21445">
    <property type="entry name" value="ENDONUCLEASE IV ENDODEOXYRIBONUCLEASE IV"/>
    <property type="match status" value="1"/>
</dbReference>
<dbReference type="Pfam" id="PF01261">
    <property type="entry name" value="AP_endonuc_2"/>
    <property type="match status" value="1"/>
</dbReference>
<dbReference type="SMART" id="SM00518">
    <property type="entry name" value="AP2Ec"/>
    <property type="match status" value="1"/>
</dbReference>
<dbReference type="SUPFAM" id="SSF51658">
    <property type="entry name" value="Xylose isomerase-like"/>
    <property type="match status" value="1"/>
</dbReference>
<dbReference type="PROSITE" id="PS00731">
    <property type="entry name" value="AP_NUCLEASE_F2_3"/>
    <property type="match status" value="1"/>
</dbReference>
<dbReference type="PROSITE" id="PS51432">
    <property type="entry name" value="AP_NUCLEASE_F2_4"/>
    <property type="match status" value="1"/>
</dbReference>
<protein>
    <recommendedName>
        <fullName evidence="1">Probable endonuclease 4</fullName>
        <ecNumber evidence="1">3.1.21.2</ecNumber>
    </recommendedName>
    <alternativeName>
        <fullName evidence="1">Endodeoxyribonuclease IV</fullName>
    </alternativeName>
    <alternativeName>
        <fullName evidence="1">Endonuclease IV</fullName>
    </alternativeName>
</protein>
<proteinExistence type="inferred from homology"/>
<feature type="chain" id="PRO_1000096886" description="Probable endonuclease 4">
    <location>
        <begin position="1"/>
        <end position="275"/>
    </location>
</feature>
<feature type="binding site" evidence="1">
    <location>
        <position position="66"/>
    </location>
    <ligand>
        <name>Zn(2+)</name>
        <dbReference type="ChEBI" id="CHEBI:29105"/>
        <label>1</label>
    </ligand>
</feature>
<feature type="binding site" evidence="1">
    <location>
        <position position="106"/>
    </location>
    <ligand>
        <name>Zn(2+)</name>
        <dbReference type="ChEBI" id="CHEBI:29105"/>
        <label>1</label>
    </ligand>
</feature>
<feature type="binding site" evidence="1">
    <location>
        <position position="140"/>
    </location>
    <ligand>
        <name>Zn(2+)</name>
        <dbReference type="ChEBI" id="CHEBI:29105"/>
        <label>1</label>
    </ligand>
</feature>
<feature type="binding site" evidence="1">
    <location>
        <position position="140"/>
    </location>
    <ligand>
        <name>Zn(2+)</name>
        <dbReference type="ChEBI" id="CHEBI:29105"/>
        <label>2</label>
    </ligand>
</feature>
<feature type="binding site" evidence="1">
    <location>
        <position position="172"/>
    </location>
    <ligand>
        <name>Zn(2+)</name>
        <dbReference type="ChEBI" id="CHEBI:29105"/>
        <label>2</label>
    </ligand>
</feature>
<feature type="binding site" evidence="1">
    <location>
        <position position="175"/>
    </location>
    <ligand>
        <name>Zn(2+)</name>
        <dbReference type="ChEBI" id="CHEBI:29105"/>
        <label>3</label>
    </ligand>
</feature>
<feature type="binding site" evidence="1">
    <location>
        <position position="209"/>
    </location>
    <ligand>
        <name>Zn(2+)</name>
        <dbReference type="ChEBI" id="CHEBI:29105"/>
        <label>2</label>
    </ligand>
</feature>
<feature type="binding site" evidence="1">
    <location>
        <position position="222"/>
    </location>
    <ligand>
        <name>Zn(2+)</name>
        <dbReference type="ChEBI" id="CHEBI:29105"/>
        <label>3</label>
    </ligand>
</feature>
<feature type="binding site" evidence="1">
    <location>
        <position position="224"/>
    </location>
    <ligand>
        <name>Zn(2+)</name>
        <dbReference type="ChEBI" id="CHEBI:29105"/>
        <label>3</label>
    </ligand>
</feature>
<feature type="binding site" evidence="1">
    <location>
        <position position="254"/>
    </location>
    <ligand>
        <name>Zn(2+)</name>
        <dbReference type="ChEBI" id="CHEBI:29105"/>
        <label>2</label>
    </ligand>
</feature>
<name>END4_HALS3</name>
<comment type="function">
    <text evidence="1">Endonuclease IV plays a role in DNA repair. It cleaves phosphodiester bonds at apurinic or apyrimidinic (AP) sites, generating a 3'-hydroxyl group and a 5'-terminal sugar phosphate.</text>
</comment>
<comment type="catalytic activity">
    <reaction evidence="1">
        <text>Endonucleolytic cleavage to 5'-phosphooligonucleotide end-products.</text>
        <dbReference type="EC" id="3.1.21.2"/>
    </reaction>
</comment>
<comment type="cofactor">
    <cofactor evidence="1">
        <name>Zn(2+)</name>
        <dbReference type="ChEBI" id="CHEBI:29105"/>
    </cofactor>
    <text evidence="1">Binds 3 Zn(2+) ions.</text>
</comment>
<comment type="similarity">
    <text evidence="1">Belongs to the AP endonuclease 2 family.</text>
</comment>
<reference key="1">
    <citation type="journal article" date="2008" name="Genomics">
        <title>Evolution in the laboratory: the genome of Halobacterium salinarum strain R1 compared to that of strain NRC-1.</title>
        <authorList>
            <person name="Pfeiffer F."/>
            <person name="Schuster S.C."/>
            <person name="Broicher A."/>
            <person name="Falb M."/>
            <person name="Palm P."/>
            <person name="Rodewald K."/>
            <person name="Ruepp A."/>
            <person name="Soppa J."/>
            <person name="Tittor J."/>
            <person name="Oesterhelt D."/>
        </authorList>
    </citation>
    <scope>NUCLEOTIDE SEQUENCE [LARGE SCALE GENOMIC DNA]</scope>
    <source>
        <strain>ATCC 29341 / DSM 671 / R1</strain>
    </source>
</reference>